<comment type="function">
    <text evidence="3 6 8 9 10">Alpha subunit of the heteropentameric ligand-gated chloride channel gated by gamma-aminobutyric acid (GABA), a major inhibitory neurotransmitter in the brain (PubMed:14993607, PubMed:29961870, PubMed:30140029, PubMed:31056671). GABA-gated chloride channels, also named GABA(A) receptors (GABAAR), consist of five subunits arranged around a central pore and contain GABA active binding site(s) located at the alpha and beta subunit interface(s) (PubMed:30140029). When activated by GABA, GABAARs selectively allow the flow of chloride anions across the cell membrane down their electrochemical gradient (PubMed:14993607, PubMed:30140029). GABAARs containing alpha-5/GABRA5 subunits are mainly extrasynaptic and contribute to the tonic GABAergic inhibition in the hippocampus (By similarity). Extrasynaptic alpha-5-containing GABAARs in CA1 pyramidal neurons play a role in learning and memory processes (By similarity).</text>
</comment>
<comment type="catalytic activity">
    <reaction evidence="6 8 9 10">
        <text>chloride(in) = chloride(out)</text>
        <dbReference type="Rhea" id="RHEA:29823"/>
        <dbReference type="ChEBI" id="CHEBI:17996"/>
    </reaction>
</comment>
<comment type="subunit">
    <text evidence="6 9">Heteropentamer, formed by a combination of alpha (GABRA1-6), beta (GABRB1-3), gamma (GABRG1-3), delta (GABRD), epsilon (GABRE), rho (GABRR1-3), pi (GABRP) and theta (GABRQ) chains, each subunit exhibiting distinct physiological and pharmacological properties.</text>
</comment>
<comment type="subcellular location">
    <subcellularLocation>
        <location evidence="10">Postsynaptic cell membrane</location>
        <topology evidence="9">Multi-pass membrane protein</topology>
    </subcellularLocation>
    <subcellularLocation>
        <location evidence="10">Cell membrane</location>
        <topology evidence="9">Multi-pass membrane protein</topology>
    </subcellularLocation>
</comment>
<comment type="domain">
    <text evidence="9">GABAARs subunits share a common topological structure: a peptide sequence made up of a long extracellular N-terminal, four transmembrane domains, intracellular or cytoplasmic domain located between the third and the fourth transmembrane domains.</text>
</comment>
<comment type="disease" evidence="8 10">
    <disease id="DI-05653">
        <name>Developmental and epileptic encephalopathy 79</name>
        <acronym>DEE79</acronym>
        <description>A form of epileptic encephalopathy, a heterogeneous group of severe early-onset epilepsies characterized by refractory seizures, neurodevelopmental impairment, and poor prognosis. Development is normal prior to seizure onset, after which cognitive and motor delays become apparent. DEE79 is an autosomal dominant form characterized by onset of refractory seizures in the first months of life. Brain imaging may show hypomyelination, cerebral atrophy and thinning of the corpus callosum.</description>
        <dbReference type="MIM" id="618559"/>
    </disease>
    <text>The disease is caused by variants affecting the gene represented in this entry.</text>
</comment>
<comment type="similarity">
    <text evidence="12">Belongs to the ligand-gated ion channel (TC 1.A.9) family. Gamma-aminobutyric acid receptor (TC 1.A.9.5) subfamily. GABRA5 sub-subfamily.</text>
</comment>
<comment type="online information" name="Protein Spotlight">
    <link uri="https://www.proteinspotlight.org/back_issues/056"/>
    <text>Forbidden fruit - Issue 56 of March 2005</text>
</comment>
<dbReference type="EMBL" id="L08485">
    <property type="protein sequence ID" value="AAA58490.1"/>
    <property type="molecule type" value="mRNA"/>
</dbReference>
<dbReference type="EMBL" id="AK290453">
    <property type="protein sequence ID" value="BAF83142.1"/>
    <property type="molecule type" value="mRNA"/>
</dbReference>
<dbReference type="EMBL" id="BT009830">
    <property type="protein sequence ID" value="AAP88832.1"/>
    <property type="molecule type" value="mRNA"/>
</dbReference>
<dbReference type="EMBL" id="BC111979">
    <property type="protein sequence ID" value="AAI11980.1"/>
    <property type="molecule type" value="mRNA"/>
</dbReference>
<dbReference type="EMBL" id="BC113422">
    <property type="protein sequence ID" value="AAI13423.1"/>
    <property type="molecule type" value="mRNA"/>
</dbReference>
<dbReference type="EMBL" id="AF061785">
    <property type="protein sequence ID" value="AAC31809.1"/>
    <property type="molecule type" value="Genomic_DNA"/>
</dbReference>
<dbReference type="EMBL" id="AF228447">
    <property type="protein sequence ID" value="AAF62508.1"/>
    <property type="molecule type" value="Genomic_DNA"/>
</dbReference>
<dbReference type="EMBL" id="AF228448">
    <property type="protein sequence ID" value="AAF62509.1"/>
    <property type="molecule type" value="Genomic_DNA"/>
</dbReference>
<dbReference type="EMBL" id="AF228449">
    <property type="protein sequence ID" value="AAF62510.1"/>
    <property type="molecule type" value="Genomic_DNA"/>
</dbReference>
<dbReference type="CCDS" id="CCDS45194.1"/>
<dbReference type="PIR" id="A48933">
    <property type="entry name" value="A48933"/>
</dbReference>
<dbReference type="RefSeq" id="NP_000801.1">
    <property type="nucleotide sequence ID" value="NM_000810.4"/>
</dbReference>
<dbReference type="RefSeq" id="NP_001158509.1">
    <property type="nucleotide sequence ID" value="NM_001165037.2"/>
</dbReference>
<dbReference type="RefSeq" id="XP_005268315.1">
    <property type="nucleotide sequence ID" value="XM_005268258.3"/>
</dbReference>
<dbReference type="RefSeq" id="XP_006720522.1">
    <property type="nucleotide sequence ID" value="XM_006720459.3"/>
</dbReference>
<dbReference type="RefSeq" id="XP_054233637.1">
    <property type="nucleotide sequence ID" value="XM_054377662.1"/>
</dbReference>
<dbReference type="RefSeq" id="XP_054233638.1">
    <property type="nucleotide sequence ID" value="XM_054377663.1"/>
</dbReference>
<dbReference type="PDB" id="5O8F">
    <property type="method" value="X-ray"/>
    <property type="resolution" value="3.20 A"/>
    <property type="chains" value="A/B/C/D/E=261-346, A/B/C/D/E=424-462"/>
</dbReference>
<dbReference type="PDB" id="5OJM">
    <property type="method" value="X-ray"/>
    <property type="resolution" value="3.30 A"/>
    <property type="chains" value="A/B/C/D/E=257-346, A/B/C/D/E=424-462"/>
</dbReference>
<dbReference type="PDB" id="6A96">
    <property type="method" value="EM"/>
    <property type="resolution" value="3.51 A"/>
    <property type="chains" value="A=1-346, A=424-462"/>
</dbReference>
<dbReference type="PDB" id="8BEJ">
    <property type="method" value="EM"/>
    <property type="resolution" value="3.24 A"/>
    <property type="chains" value="A/B/C/D/E=32-345, A/B/C/D/E=424-450"/>
</dbReference>
<dbReference type="PDB" id="8BGI">
    <property type="method" value="X-ray"/>
    <property type="resolution" value="2.56 A"/>
    <property type="chains" value="A/B/C/D/E=32-346, A/B/C/D/E=424-450"/>
</dbReference>
<dbReference type="PDB" id="8BHA">
    <property type="method" value="EM"/>
    <property type="resolution" value="2.67 A"/>
    <property type="chains" value="A/B/C/D/E=32-315, A/B/C/D/E=424-450"/>
</dbReference>
<dbReference type="PDB" id="8BHB">
    <property type="method" value="EM"/>
    <property type="resolution" value="2.54 A"/>
    <property type="chains" value="A/B/C/D/E=32-315, A/B/C/D/E=424-450"/>
</dbReference>
<dbReference type="PDB" id="8BHG">
    <property type="method" value="X-ray"/>
    <property type="resolution" value="2.39 A"/>
    <property type="chains" value="A/C/D/E=32-451"/>
</dbReference>
<dbReference type="PDB" id="8BHI">
    <property type="method" value="EM"/>
    <property type="resolution" value="2.67 A"/>
    <property type="chains" value="A/B/C/D/E=32-315, A/B/C/D/E=424-450"/>
</dbReference>
<dbReference type="PDB" id="8BHK">
    <property type="method" value="EM"/>
    <property type="resolution" value="3.30 A"/>
    <property type="chains" value="A/B/C/D/E=32-315, A/B/C/D/E=424-450"/>
</dbReference>
<dbReference type="PDB" id="8BHM">
    <property type="method" value="EM"/>
    <property type="resolution" value="2.95 A"/>
    <property type="chains" value="A/B/C/D/E=32-315, A/B/C/D/E=424-450"/>
</dbReference>
<dbReference type="PDB" id="8BHO">
    <property type="method" value="EM"/>
    <property type="resolution" value="2.93 A"/>
    <property type="chains" value="A/B/C/D/E=32-315, A/B/C/D/E=424-450"/>
</dbReference>
<dbReference type="PDB" id="8BHQ">
    <property type="method" value="EM"/>
    <property type="resolution" value="3.30 A"/>
    <property type="chains" value="A/B/C/D/E=32-315, A/B/C/D/E=424-450"/>
</dbReference>
<dbReference type="PDB" id="8BHR">
    <property type="method" value="EM"/>
    <property type="resolution" value="3.38 A"/>
    <property type="chains" value="A/B/C/D/E=32-315, A/B/C/D/E=424-450"/>
</dbReference>
<dbReference type="PDB" id="8BHS">
    <property type="method" value="EM"/>
    <property type="resolution" value="3.24 A"/>
    <property type="chains" value="A/B/C/D/E=32-346, A/B/C/D/E=424-450"/>
</dbReference>
<dbReference type="PDBsum" id="5O8F"/>
<dbReference type="PDBsum" id="5OJM"/>
<dbReference type="PDBsum" id="6A96"/>
<dbReference type="PDBsum" id="8BEJ"/>
<dbReference type="PDBsum" id="8BGI"/>
<dbReference type="PDBsum" id="8BHA"/>
<dbReference type="PDBsum" id="8BHB"/>
<dbReference type="PDBsum" id="8BHG"/>
<dbReference type="PDBsum" id="8BHI"/>
<dbReference type="PDBsum" id="8BHK"/>
<dbReference type="PDBsum" id="8BHM"/>
<dbReference type="PDBsum" id="8BHO"/>
<dbReference type="PDBsum" id="8BHQ"/>
<dbReference type="PDBsum" id="8BHR"/>
<dbReference type="PDBsum" id="8BHS"/>
<dbReference type="EMDB" id="EMD-16005"/>
<dbReference type="EMDB" id="EMD-16050"/>
<dbReference type="EMDB" id="EMD-16051"/>
<dbReference type="EMDB" id="EMD-16055"/>
<dbReference type="EMDB" id="EMD-16058"/>
<dbReference type="EMDB" id="EMD-16060"/>
<dbReference type="EMDB" id="EMD-16063"/>
<dbReference type="EMDB" id="EMD-16066"/>
<dbReference type="EMDB" id="EMD-16067"/>
<dbReference type="EMDB" id="EMD-16068"/>
<dbReference type="EMDB" id="EMD-6998"/>
<dbReference type="SMR" id="P31644"/>
<dbReference type="BioGRID" id="108832">
    <property type="interactions" value="6"/>
</dbReference>
<dbReference type="ComplexPortal" id="CPX-2168">
    <property type="entry name" value="GABA-A receptor, alpha5-beta3-gamma2"/>
</dbReference>
<dbReference type="ComplexPortal" id="CPX-8575">
    <property type="entry name" value="GABA-A receptor, alpha5-beta3-gamma3"/>
</dbReference>
<dbReference type="ComplexPortal" id="CPX-8576">
    <property type="entry name" value="GABA-A receptor, alpha5-beta2-gamma2"/>
</dbReference>
<dbReference type="ComplexPortal" id="CPX-8701">
    <property type="entry name" value="GABA-A receptor, alpha-5/beta-3 complex"/>
</dbReference>
<dbReference type="ComplexPortal" id="CPX-8724">
    <property type="entry name" value="GABA-A receptor, alpha5-beta1-gamma2 complex"/>
</dbReference>
<dbReference type="FunCoup" id="P31644">
    <property type="interactions" value="665"/>
</dbReference>
<dbReference type="IntAct" id="P31644">
    <property type="interactions" value="2"/>
</dbReference>
<dbReference type="STRING" id="9606.ENSP00000382953"/>
<dbReference type="BindingDB" id="P31644"/>
<dbReference type="ChEMBL" id="CHEMBL5112"/>
<dbReference type="DrugBank" id="DB12537">
    <property type="generic name" value="1,2-Benzodiazepine"/>
</dbReference>
<dbReference type="DrugBank" id="DB00546">
    <property type="generic name" value="Adinazolam"/>
</dbReference>
<dbReference type="DrugBank" id="DB06579">
    <property type="generic name" value="Adipiplon"/>
</dbReference>
<dbReference type="DrugBank" id="DB00404">
    <property type="generic name" value="Alprazolam"/>
</dbReference>
<dbReference type="DrugBank" id="DB01351">
    <property type="generic name" value="Amobarbital"/>
</dbReference>
<dbReference type="DrugBank" id="DB00543">
    <property type="generic name" value="Amoxapine"/>
</dbReference>
<dbReference type="DrugBank" id="DB11901">
    <property type="generic name" value="Apalutamide"/>
</dbReference>
<dbReference type="DrugBank" id="DB01352">
    <property type="generic name" value="Aprobarbital"/>
</dbReference>
<dbReference type="DrugBank" id="DB01483">
    <property type="generic name" value="Barbital"/>
</dbReference>
<dbReference type="DrugBank" id="DB11877">
    <property type="generic name" value="Basmisanil"/>
</dbReference>
<dbReference type="DrugBank" id="DB14719">
    <property type="generic name" value="Bentazepam"/>
</dbReference>
<dbReference type="DrugBank" id="DB11859">
    <property type="generic name" value="Brexanolone"/>
</dbReference>
<dbReference type="DrugBank" id="DB01558">
    <property type="generic name" value="Bromazepam"/>
</dbReference>
<dbReference type="DrugBank" id="DB09017">
    <property type="generic name" value="Brotizolam"/>
</dbReference>
<dbReference type="DrugBank" id="DB00237">
    <property type="generic name" value="Butabarbital"/>
</dbReference>
<dbReference type="DrugBank" id="DB00241">
    <property type="generic name" value="Butalbital"/>
</dbReference>
<dbReference type="DrugBank" id="DB01353">
    <property type="generic name" value="Butobarbital"/>
</dbReference>
<dbReference type="DrugBank" id="DB01489">
    <property type="generic name" value="Camazepam"/>
</dbReference>
<dbReference type="DrugBank" id="DB00395">
    <property type="generic name" value="Carisoprodol"/>
</dbReference>
<dbReference type="DrugBank" id="DB00475">
    <property type="generic name" value="Chlordiazepoxide"/>
</dbReference>
<dbReference type="DrugBank" id="DB14715">
    <property type="generic name" value="Cinazepam"/>
</dbReference>
<dbReference type="DrugBank" id="DB01594">
    <property type="generic name" value="Cinolazepam"/>
</dbReference>
<dbReference type="DrugBank" id="DB00349">
    <property type="generic name" value="Clobazam"/>
</dbReference>
<dbReference type="DrugBank" id="DB01068">
    <property type="generic name" value="Clonazepam"/>
</dbReference>
<dbReference type="DrugBank" id="DB00628">
    <property type="generic name" value="Clorazepic acid"/>
</dbReference>
<dbReference type="DrugBank" id="DB01559">
    <property type="generic name" value="Clotiazepam"/>
</dbReference>
<dbReference type="DrugBank" id="DB01553">
    <property type="generic name" value="Cloxazolam"/>
</dbReference>
<dbReference type="DrugBank" id="DB01511">
    <property type="generic name" value="Delorazepam"/>
</dbReference>
<dbReference type="DrugBank" id="DB01189">
    <property type="generic name" value="Desflurane"/>
</dbReference>
<dbReference type="DrugBank" id="DB00829">
    <property type="generic name" value="Diazepam"/>
</dbReference>
<dbReference type="DrugBank" id="DB01496">
    <property type="generic name" value="Dihydro-2-thioxo-5-((5-(2-(trifluoromethyl)phenyl)-2-furanyl)methyl)-4,6(1H,5H)-pyrimidinedione"/>
</dbReference>
<dbReference type="DrugBank" id="DB13837">
    <property type="generic name" value="Doxefazepam"/>
</dbReference>
<dbReference type="DrugBank" id="DB00228">
    <property type="generic name" value="Enflurane"/>
</dbReference>
<dbReference type="DrugBank" id="DB01215">
    <property type="generic name" value="Estazolam"/>
</dbReference>
<dbReference type="DrugBank" id="DB00402">
    <property type="generic name" value="Eszopiclone"/>
</dbReference>
<dbReference type="DrugBank" id="DB00898">
    <property type="generic name" value="Ethanol"/>
</dbReference>
<dbReference type="DrugBank" id="DB00189">
    <property type="generic name" value="Ethchlorvynol"/>
</dbReference>
<dbReference type="DrugBank" id="DB01545">
    <property type="generic name" value="Ethyl loflazepate"/>
</dbReference>
<dbReference type="DrugBank" id="DB09166">
    <property type="generic name" value="Etizolam"/>
</dbReference>
<dbReference type="DrugBank" id="DB00292">
    <property type="generic name" value="Etomidate"/>
</dbReference>
<dbReference type="DrugBank" id="DB01567">
    <property type="generic name" value="Fludiazepam"/>
</dbReference>
<dbReference type="DrugBank" id="DB01205">
    <property type="generic name" value="Flumazenil"/>
</dbReference>
<dbReference type="DrugBank" id="DB01544">
    <property type="generic name" value="Flunitrazepam"/>
</dbReference>
<dbReference type="DrugBank" id="DB00690">
    <property type="generic name" value="Flurazepam"/>
</dbReference>
<dbReference type="DrugBank" id="DB02530">
    <property type="generic name" value="gamma-Aminobutyric acid"/>
</dbReference>
<dbReference type="DrugBank" id="DB05087">
    <property type="generic name" value="Ganaxolone"/>
</dbReference>
<dbReference type="DrugBank" id="DB01437">
    <property type="generic name" value="Glutethimide"/>
</dbReference>
<dbReference type="DrugBank" id="DB00801">
    <property type="generic name" value="Halazepam"/>
</dbReference>
<dbReference type="DrugBank" id="DB01159">
    <property type="generic name" value="Halothane"/>
</dbReference>
<dbReference type="DrugBank" id="DB01354">
    <property type="generic name" value="Heptabarbital"/>
</dbReference>
<dbReference type="DrugBank" id="DB01355">
    <property type="generic name" value="Hexobarbital"/>
</dbReference>
<dbReference type="DrugBank" id="DB00753">
    <property type="generic name" value="Isoflurane"/>
</dbReference>
<dbReference type="DrugBank" id="DB01587">
    <property type="generic name" value="Ketazolam"/>
</dbReference>
<dbReference type="DrugBank" id="DB00555">
    <property type="generic name" value="Lamotrigine"/>
</dbReference>
<dbReference type="DrugBank" id="DB13643">
    <property type="generic name" value="Loprazolam"/>
</dbReference>
<dbReference type="DrugBank" id="DB00186">
    <property type="generic name" value="Lorazepam"/>
</dbReference>
<dbReference type="DrugBank" id="DB13872">
    <property type="generic name" value="Lormetazepam"/>
</dbReference>
<dbReference type="DrugBank" id="DB13437">
    <property type="generic name" value="Medazepam"/>
</dbReference>
<dbReference type="DrugBank" id="DB00603">
    <property type="generic name" value="Medroxyprogesterone acetate"/>
</dbReference>
<dbReference type="DrugBank" id="DB01043">
    <property type="generic name" value="Memantine"/>
</dbReference>
<dbReference type="DrugBank" id="DB00371">
    <property type="generic name" value="Meprobamate"/>
</dbReference>
<dbReference type="DrugBank" id="DB00463">
    <property type="generic name" value="Metharbital"/>
</dbReference>
<dbReference type="DrugBank" id="DB01028">
    <property type="generic name" value="Methoxyflurane"/>
</dbReference>
<dbReference type="DrugBank" id="DB00849">
    <property type="generic name" value="Methylphenobarbital"/>
</dbReference>
<dbReference type="DrugBank" id="DB01107">
    <property type="generic name" value="Methyprylon"/>
</dbReference>
<dbReference type="DrugBank" id="DB15489">
    <property type="generic name" value="Mexazolam"/>
</dbReference>
<dbReference type="DrugBank" id="DB00683">
    <property type="generic name" value="Midazolam"/>
</dbReference>
<dbReference type="DrugBank" id="DB01595">
    <property type="generic name" value="Nitrazepam"/>
</dbReference>
<dbReference type="DrugBank" id="DB14028">
    <property type="generic name" value="Nordazepam"/>
</dbReference>
<dbReference type="DrugBank" id="DB00334">
    <property type="generic name" value="Olanzapine"/>
</dbReference>
<dbReference type="DrugBank" id="DB00842">
    <property type="generic name" value="Oxazepam"/>
</dbReference>
<dbReference type="DrugBank" id="DB14672">
    <property type="generic name" value="Oxazepam acetate"/>
</dbReference>
<dbReference type="DrugBank" id="DB00312">
    <property type="generic name" value="Pentobarbital"/>
</dbReference>
<dbReference type="DrugBank" id="DB00252">
    <property type="generic name" value="Phenytoin"/>
</dbReference>
<dbReference type="DrugBank" id="DB13335">
    <property type="generic name" value="Pinazepam"/>
</dbReference>
<dbReference type="DrugBank" id="DB01708">
    <property type="generic name" value="Prasterone"/>
</dbReference>
<dbReference type="DrugBank" id="DB01588">
    <property type="generic name" value="Prazepam"/>
</dbReference>
<dbReference type="DrugBank" id="DB00794">
    <property type="generic name" value="Primidone"/>
</dbReference>
<dbReference type="DrugBank" id="DB00818">
    <property type="generic name" value="Propofol"/>
</dbReference>
<dbReference type="DrugBank" id="DB01589">
    <property type="generic name" value="Quazepam"/>
</dbReference>
<dbReference type="DrugBank" id="DB12404">
    <property type="generic name" value="Remimazolam"/>
</dbReference>
<dbReference type="DrugBank" id="DB00418">
    <property type="generic name" value="Secobarbital"/>
</dbReference>
<dbReference type="DrugBank" id="DB01236">
    <property type="generic name" value="Sevoflurane"/>
</dbReference>
<dbReference type="DrugBank" id="DB09118">
    <property type="generic name" value="Stiripentol"/>
</dbReference>
<dbReference type="DrugBank" id="DB00306">
    <property type="generic name" value="Talbutal"/>
</dbReference>
<dbReference type="DrugBank" id="DB01956">
    <property type="generic name" value="Taurine"/>
</dbReference>
<dbReference type="DrugBank" id="DB00231">
    <property type="generic name" value="Temazepam"/>
</dbReference>
<dbReference type="DrugBank" id="DB11582">
    <property type="generic name" value="Thiocolchicoside"/>
</dbReference>
<dbReference type="DrugBank" id="DB00599">
    <property type="generic name" value="Thiopental"/>
</dbReference>
<dbReference type="DrugBank" id="DB00897">
    <property type="generic name" value="Triazolam"/>
</dbReference>
<dbReference type="DrugBank" id="DB00909">
    <property type="generic name" value="Zonisamide"/>
</dbReference>
<dbReference type="DrugBank" id="DB01198">
    <property type="generic name" value="Zopiclone"/>
</dbReference>
<dbReference type="DrugBank" id="DB15490">
    <property type="generic name" value="Zuranolone"/>
</dbReference>
<dbReference type="DrugCentral" id="P31644"/>
<dbReference type="GuidetoPHARMACOLOGY" id="408"/>
<dbReference type="TCDB" id="1.A.9.5.15">
    <property type="family name" value="the neurotransmitter receptor, cys loop, ligand-gated ion channel (lic) family"/>
</dbReference>
<dbReference type="GlyCosmos" id="P31644">
    <property type="glycosylation" value="4 sites, No reported glycans"/>
</dbReference>
<dbReference type="GlyGen" id="P31644">
    <property type="glycosylation" value="5 sites, 1 O-linked glycan (1 site)"/>
</dbReference>
<dbReference type="iPTMnet" id="P31644"/>
<dbReference type="PhosphoSitePlus" id="P31644"/>
<dbReference type="BioMuta" id="GABRA5"/>
<dbReference type="DMDM" id="399519"/>
<dbReference type="jPOST" id="P31644"/>
<dbReference type="MassIVE" id="P31644"/>
<dbReference type="PaxDb" id="9606-ENSP00000335592"/>
<dbReference type="PeptideAtlas" id="P31644"/>
<dbReference type="ProteomicsDB" id="54797"/>
<dbReference type="ABCD" id="P31644">
    <property type="antibodies" value="1 sequenced antibody"/>
</dbReference>
<dbReference type="Antibodypedia" id="22325">
    <property type="antibodies" value="384 antibodies from 32 providers"/>
</dbReference>
<dbReference type="DNASU" id="2558"/>
<dbReference type="Ensembl" id="ENST00000335625.10">
    <property type="protein sequence ID" value="ENSP00000335592.5"/>
    <property type="gene ID" value="ENSG00000186297.12"/>
</dbReference>
<dbReference type="Ensembl" id="ENST00000355395.9">
    <property type="protein sequence ID" value="ENSP00000347557.5"/>
    <property type="gene ID" value="ENSG00000186297.12"/>
</dbReference>
<dbReference type="Ensembl" id="ENST00000400081.7">
    <property type="protein sequence ID" value="ENSP00000382953.3"/>
    <property type="gene ID" value="ENSG00000186297.12"/>
</dbReference>
<dbReference type="GeneID" id="2558"/>
<dbReference type="KEGG" id="hsa:2558"/>
<dbReference type="MANE-Select" id="ENST00000335625.10">
    <property type="protein sequence ID" value="ENSP00000335592.5"/>
    <property type="RefSeq nucleotide sequence ID" value="NM_000810.4"/>
    <property type="RefSeq protein sequence ID" value="NP_000801.1"/>
</dbReference>
<dbReference type="UCSC" id="uc001zbd.3">
    <property type="organism name" value="human"/>
</dbReference>
<dbReference type="AGR" id="HGNC:4079"/>
<dbReference type="CTD" id="2558"/>
<dbReference type="DisGeNET" id="2558"/>
<dbReference type="GeneCards" id="GABRA5"/>
<dbReference type="GeneReviews" id="GABRA5"/>
<dbReference type="HGNC" id="HGNC:4079">
    <property type="gene designation" value="GABRA5"/>
</dbReference>
<dbReference type="HPA" id="ENSG00000186297">
    <property type="expression patterns" value="Tissue enriched (brain)"/>
</dbReference>
<dbReference type="MalaCards" id="GABRA5"/>
<dbReference type="MIM" id="137142">
    <property type="type" value="gene"/>
</dbReference>
<dbReference type="MIM" id="618559">
    <property type="type" value="phenotype"/>
</dbReference>
<dbReference type="neXtProt" id="NX_P31644"/>
<dbReference type="OpenTargets" id="ENSG00000186297"/>
<dbReference type="Orphanet" id="442835">
    <property type="disease" value="Non-specific early-onset epileptic encephalopathy"/>
</dbReference>
<dbReference type="PharmGKB" id="PA28493"/>
<dbReference type="VEuPathDB" id="HostDB:ENSG00000186297"/>
<dbReference type="eggNOG" id="KOG3642">
    <property type="taxonomic scope" value="Eukaryota"/>
</dbReference>
<dbReference type="GeneTree" id="ENSGT00940000156234"/>
<dbReference type="HOGENOM" id="CLU_010920_2_1_1"/>
<dbReference type="InParanoid" id="P31644"/>
<dbReference type="OMA" id="CFLWFPS"/>
<dbReference type="OrthoDB" id="203862at2759"/>
<dbReference type="PAN-GO" id="P31644">
    <property type="GO annotations" value="19 GO annotations based on evolutionary models"/>
</dbReference>
<dbReference type="PhylomeDB" id="P31644"/>
<dbReference type="TreeFam" id="TF315453"/>
<dbReference type="PathwayCommons" id="P31644"/>
<dbReference type="Reactome" id="R-HSA-977443">
    <property type="pathway name" value="GABA receptor activation"/>
</dbReference>
<dbReference type="SignaLink" id="P31644"/>
<dbReference type="SIGNOR" id="P31644"/>
<dbReference type="BioGRID-ORCS" id="2558">
    <property type="hits" value="13 hits in 1155 CRISPR screens"/>
</dbReference>
<dbReference type="ChiTaRS" id="GABRA5">
    <property type="organism name" value="human"/>
</dbReference>
<dbReference type="GeneWiki" id="GABRA5"/>
<dbReference type="GenomeRNAi" id="2558"/>
<dbReference type="Pharos" id="P31644">
    <property type="development level" value="Tclin"/>
</dbReference>
<dbReference type="PRO" id="PR:P31644"/>
<dbReference type="Proteomes" id="UP000005640">
    <property type="component" value="Chromosome 15"/>
</dbReference>
<dbReference type="RNAct" id="P31644">
    <property type="molecule type" value="protein"/>
</dbReference>
<dbReference type="Bgee" id="ENSG00000186297">
    <property type="expression patterns" value="Expressed in nucleus accumbens and 106 other cell types or tissues"/>
</dbReference>
<dbReference type="ExpressionAtlas" id="P31644">
    <property type="expression patterns" value="baseline and differential"/>
</dbReference>
<dbReference type="GO" id="GO:0034707">
    <property type="term" value="C:chloride channel complex"/>
    <property type="evidence" value="ECO:0007669"/>
    <property type="project" value="UniProtKB-KW"/>
</dbReference>
<dbReference type="GO" id="GO:0005829">
    <property type="term" value="C:cytosol"/>
    <property type="evidence" value="ECO:0000314"/>
    <property type="project" value="HPA"/>
</dbReference>
<dbReference type="GO" id="GO:0032590">
    <property type="term" value="C:dendrite membrane"/>
    <property type="evidence" value="ECO:0000318"/>
    <property type="project" value="GO_Central"/>
</dbReference>
<dbReference type="GO" id="GO:1902711">
    <property type="term" value="C:GABA-A receptor complex"/>
    <property type="evidence" value="ECO:0000250"/>
    <property type="project" value="ComplexPortal"/>
</dbReference>
<dbReference type="GO" id="GO:0098982">
    <property type="term" value="C:GABA-ergic synapse"/>
    <property type="evidence" value="ECO:0007669"/>
    <property type="project" value="Ensembl"/>
</dbReference>
<dbReference type="GO" id="GO:0032809">
    <property type="term" value="C:neuronal cell body membrane"/>
    <property type="evidence" value="ECO:0007669"/>
    <property type="project" value="Ensembl"/>
</dbReference>
<dbReference type="GO" id="GO:0005654">
    <property type="term" value="C:nucleoplasm"/>
    <property type="evidence" value="ECO:0000314"/>
    <property type="project" value="HPA"/>
</dbReference>
<dbReference type="GO" id="GO:0005886">
    <property type="term" value="C:plasma membrane"/>
    <property type="evidence" value="ECO:0000314"/>
    <property type="project" value="HPA"/>
</dbReference>
<dbReference type="GO" id="GO:0098794">
    <property type="term" value="C:postsynapse"/>
    <property type="evidence" value="ECO:0000318"/>
    <property type="project" value="GO_Central"/>
</dbReference>
<dbReference type="GO" id="GO:0099634">
    <property type="term" value="C:postsynaptic specialization membrane"/>
    <property type="evidence" value="ECO:0007669"/>
    <property type="project" value="Ensembl"/>
</dbReference>
<dbReference type="GO" id="GO:0042734">
    <property type="term" value="C:presynaptic membrane"/>
    <property type="evidence" value="ECO:0007669"/>
    <property type="project" value="Ensembl"/>
</dbReference>
<dbReference type="GO" id="GO:0050811">
    <property type="term" value="F:GABA receptor binding"/>
    <property type="evidence" value="ECO:0007669"/>
    <property type="project" value="Ensembl"/>
</dbReference>
<dbReference type="GO" id="GO:0004890">
    <property type="term" value="F:GABA-A receptor activity"/>
    <property type="evidence" value="ECO:0000250"/>
    <property type="project" value="UniProtKB"/>
</dbReference>
<dbReference type="GO" id="GO:0022851">
    <property type="term" value="F:GABA-gated chloride ion channel activity"/>
    <property type="evidence" value="ECO:0000250"/>
    <property type="project" value="UniProtKB"/>
</dbReference>
<dbReference type="GO" id="GO:0099507">
    <property type="term" value="F:ligand-gated monoatomic ion channel activity involved in regulation of presynaptic membrane potential"/>
    <property type="evidence" value="ECO:0000314"/>
    <property type="project" value="SynGO"/>
</dbReference>
<dbReference type="GO" id="GO:0038023">
    <property type="term" value="F:signaling receptor activity"/>
    <property type="evidence" value="ECO:0000304"/>
    <property type="project" value="ProtInc"/>
</dbReference>
<dbReference type="GO" id="GO:1904315">
    <property type="term" value="F:transmitter-gated monoatomic ion channel activity involved in regulation of postsynaptic membrane potential"/>
    <property type="evidence" value="ECO:0007669"/>
    <property type="project" value="Ensembl"/>
</dbReference>
<dbReference type="GO" id="GO:0008306">
    <property type="term" value="P:associative learning"/>
    <property type="evidence" value="ECO:0007669"/>
    <property type="project" value="Ensembl"/>
</dbReference>
<dbReference type="GO" id="GO:0001662">
    <property type="term" value="P:behavioral fear response"/>
    <property type="evidence" value="ECO:0007669"/>
    <property type="project" value="Ensembl"/>
</dbReference>
<dbReference type="GO" id="GO:1902476">
    <property type="term" value="P:chloride transmembrane transport"/>
    <property type="evidence" value="ECO:0000318"/>
    <property type="project" value="GO_Central"/>
</dbReference>
<dbReference type="GO" id="GO:0090102">
    <property type="term" value="P:cochlea development"/>
    <property type="evidence" value="ECO:0007669"/>
    <property type="project" value="Ensembl"/>
</dbReference>
<dbReference type="GO" id="GO:0007214">
    <property type="term" value="P:gamma-aminobutyric acid signaling pathway"/>
    <property type="evidence" value="ECO:0000250"/>
    <property type="project" value="ComplexPortal"/>
</dbReference>
<dbReference type="GO" id="GO:1904862">
    <property type="term" value="P:inhibitory synapse assembly"/>
    <property type="evidence" value="ECO:0000318"/>
    <property type="project" value="GO_Central"/>
</dbReference>
<dbReference type="GO" id="GO:0060119">
    <property type="term" value="P:inner ear receptor cell development"/>
    <property type="evidence" value="ECO:0007669"/>
    <property type="project" value="Ensembl"/>
</dbReference>
<dbReference type="GO" id="GO:0060384">
    <property type="term" value="P:innervation"/>
    <property type="evidence" value="ECO:0007669"/>
    <property type="project" value="Ensembl"/>
</dbReference>
<dbReference type="GO" id="GO:0007165">
    <property type="term" value="P:signal transduction"/>
    <property type="evidence" value="ECO:0000304"/>
    <property type="project" value="ProtInc"/>
</dbReference>
<dbReference type="GO" id="GO:0051932">
    <property type="term" value="P:synaptic transmission, GABAergic"/>
    <property type="evidence" value="ECO:0000318"/>
    <property type="project" value="GO_Central"/>
</dbReference>
<dbReference type="CDD" id="cd19038">
    <property type="entry name" value="LGIC_ECD_GABAAR_A5"/>
    <property type="match status" value="1"/>
</dbReference>
<dbReference type="CDD" id="cd19052">
    <property type="entry name" value="LGIC_TM_GABAAR_alpha"/>
    <property type="match status" value="1"/>
</dbReference>
<dbReference type="FunFam" id="2.70.170.10:FF:000001">
    <property type="entry name" value="Gamma-aminobutyric acid A receptor subunit alpha-2"/>
    <property type="match status" value="1"/>
</dbReference>
<dbReference type="FunFam" id="1.20.58.390:FF:000002">
    <property type="entry name" value="Putative gamma-aminobutyric acid receptor subunit alpha-5"/>
    <property type="match status" value="1"/>
</dbReference>
<dbReference type="Gene3D" id="2.70.170.10">
    <property type="entry name" value="Neurotransmitter-gated ion-channel ligand-binding domain"/>
    <property type="match status" value="1"/>
</dbReference>
<dbReference type="Gene3D" id="1.20.58.390">
    <property type="entry name" value="Neurotransmitter-gated ion-channel transmembrane domain"/>
    <property type="match status" value="1"/>
</dbReference>
<dbReference type="InterPro" id="IPR006028">
    <property type="entry name" value="GABAA/Glycine_rcpt"/>
</dbReference>
<dbReference type="InterPro" id="IPR001390">
    <property type="entry name" value="GABAAa_rcpt"/>
</dbReference>
<dbReference type="InterPro" id="IPR005435">
    <property type="entry name" value="GABBAa5_rcpt"/>
</dbReference>
<dbReference type="InterPro" id="IPR047024">
    <property type="entry name" value="Gabra-1-6_TM"/>
</dbReference>
<dbReference type="InterPro" id="IPR006202">
    <property type="entry name" value="Neur_chan_lig-bd"/>
</dbReference>
<dbReference type="InterPro" id="IPR036734">
    <property type="entry name" value="Neur_chan_lig-bd_sf"/>
</dbReference>
<dbReference type="InterPro" id="IPR006201">
    <property type="entry name" value="Neur_channel"/>
</dbReference>
<dbReference type="InterPro" id="IPR036719">
    <property type="entry name" value="Neuro-gated_channel_TM_sf"/>
</dbReference>
<dbReference type="InterPro" id="IPR038050">
    <property type="entry name" value="Neuro_actylchol_rec"/>
</dbReference>
<dbReference type="InterPro" id="IPR006029">
    <property type="entry name" value="Neurotrans-gated_channel_TM"/>
</dbReference>
<dbReference type="InterPro" id="IPR018000">
    <property type="entry name" value="Neurotransmitter_ion_chnl_CS"/>
</dbReference>
<dbReference type="NCBIfam" id="TIGR00860">
    <property type="entry name" value="LIC"/>
    <property type="match status" value="1"/>
</dbReference>
<dbReference type="PANTHER" id="PTHR18945">
    <property type="entry name" value="NEUROTRANSMITTER GATED ION CHANNEL"/>
    <property type="match status" value="1"/>
</dbReference>
<dbReference type="Pfam" id="PF02931">
    <property type="entry name" value="Neur_chan_LBD"/>
    <property type="match status" value="1"/>
</dbReference>
<dbReference type="Pfam" id="PF02932">
    <property type="entry name" value="Neur_chan_memb"/>
    <property type="match status" value="1"/>
</dbReference>
<dbReference type="PRINTS" id="PR01079">
    <property type="entry name" value="GABAARALPHA"/>
</dbReference>
<dbReference type="PRINTS" id="PR01618">
    <property type="entry name" value="GABAARALPHA5"/>
</dbReference>
<dbReference type="PRINTS" id="PR00253">
    <property type="entry name" value="GABAARECEPTR"/>
</dbReference>
<dbReference type="PRINTS" id="PR00252">
    <property type="entry name" value="NRIONCHANNEL"/>
</dbReference>
<dbReference type="SUPFAM" id="SSF90112">
    <property type="entry name" value="Neurotransmitter-gated ion-channel transmembrane pore"/>
    <property type="match status" value="1"/>
</dbReference>
<dbReference type="SUPFAM" id="SSF63712">
    <property type="entry name" value="Nicotinic receptor ligand binding domain-like"/>
    <property type="match status" value="1"/>
</dbReference>
<dbReference type="PROSITE" id="PS00236">
    <property type="entry name" value="NEUROTR_ION_CHANNEL"/>
    <property type="match status" value="1"/>
</dbReference>
<sequence>MDNGMFSGFIMIKNLLLFCISMNLSSHFGFSQMPTSSVKDETNDNITIFTRILDGLLDGYDNRLRPGLGERITQVRTDIYVTSFGPVSDTEMEYTIDVFFRQSWKDERLRFKGPMQRLPLNNLLASKIWTPDTFFHNGKKSIAHNMTTPNKLLRLEDDGTLLYTMRLTISAECPMQLEDFPMDAHACPLKFGSYAYPNSEVVYVWTNGSTKSVVVAEDGSRLNQYHLMGQTVGTENISTSTGEYTIMTAHFHLKRKIGYFVIQTYLPCIMTVILSQVSFWLNRESVPARTVFGVTTVLTMTTLSISARNSLPKVAYATAMDWFIAVCYAFVFSALIEFATVNYFTKRGWAWDGKKALEAAKIKKKREVILNKSTNAFTTGKMSHPPNIPKEQTPAGTSNTTSVSVKPSEEKTSESKKTYNSISKIDKMSRIVFPVLFGTFNLVYWATYLNREPVIKGAASPK</sequence>
<name>GBRA5_HUMAN</name>
<proteinExistence type="evidence at protein level"/>
<feature type="signal peptide" evidence="4">
    <location>
        <begin position="1"/>
        <end position="31"/>
    </location>
</feature>
<feature type="chain" id="PRO_0000000444" description="Gamma-aminobutyric acid receptor subunit alpha-5">
    <location>
        <begin position="32"/>
        <end position="462"/>
    </location>
</feature>
<feature type="topological domain" description="Extracellular" evidence="4">
    <location>
        <begin position="32"/>
        <end position="260"/>
    </location>
</feature>
<feature type="transmembrane region" description="Helical" evidence="9 14">
    <location>
        <begin position="261"/>
        <end position="281"/>
    </location>
</feature>
<feature type="topological domain" description="Cytoplasmic" evidence="12">
    <location>
        <begin position="282"/>
        <end position="286"/>
    </location>
</feature>
<feature type="transmembrane region" description="Helical" evidence="9 14">
    <location>
        <begin position="287"/>
        <end position="308"/>
    </location>
</feature>
<feature type="topological domain" description="Extracellular" evidence="12">
    <location>
        <begin position="309"/>
        <end position="318"/>
    </location>
</feature>
<feature type="transmembrane region" description="Helical" evidence="9 14">
    <location>
        <begin position="319"/>
        <end position="340"/>
    </location>
</feature>
<feature type="topological domain" description="Cytoplasmic" evidence="4">
    <location>
        <begin position="341"/>
        <end position="427"/>
    </location>
</feature>
<feature type="transmembrane region" description="Helical" evidence="9 14">
    <location>
        <begin position="428"/>
        <end position="448"/>
    </location>
</feature>
<feature type="topological domain" description="Extracellular" evidence="12">
    <location>
        <begin position="449"/>
        <end position="462"/>
    </location>
</feature>
<feature type="region of interest" description="Disordered" evidence="5">
    <location>
        <begin position="377"/>
        <end position="412"/>
    </location>
</feature>
<feature type="binding site" evidence="9 14">
    <location>
        <position position="101"/>
    </location>
    <ligand>
        <name>4-aminobutanoate</name>
        <dbReference type="ChEBI" id="CHEBI:59888"/>
        <note>ligand shared with the neighboring beta subunit GABRB3</note>
    </ligand>
</feature>
<feature type="binding site" evidence="2">
    <location>
        <position position="164"/>
    </location>
    <ligand>
        <name>4-aminobutanoate</name>
        <dbReference type="ChEBI" id="CHEBI:59888"/>
        <note>ligand shared with the neighboring beta subunit GABRB3</note>
    </ligand>
</feature>
<feature type="glycosylation site" description="N-linked (GlcNAc...) asparagine" evidence="4">
    <location>
        <position position="45"/>
    </location>
</feature>
<feature type="glycosylation site" description="N-linked (GlcNAc...) asparagine" evidence="9 14">
    <location>
        <position position="145"/>
    </location>
</feature>
<feature type="glycosylation site" description="N-linked (GlcNAc...) asparagine" evidence="4">
    <location>
        <position position="207"/>
    </location>
</feature>
<feature type="glycosylation site" description="N-linked (GlcNAc...) asparagine" evidence="9 14">
    <location>
        <position position="236"/>
    </location>
</feature>
<feature type="disulfide bond" evidence="9 14">
    <location>
        <begin position="173"/>
        <end position="187"/>
    </location>
</feature>
<feature type="cross-link" description="Glycyl lysine isopeptide (Lys-Gly) (interchain with G-Cter in ubiquitin)" evidence="7">
    <location>
        <position position="355"/>
    </location>
</feature>
<feature type="sequence variant" id="VAR_083201" description="In DEE79; decreased subcellular localization to the cell membrane resulting in altered protein localization to the synapse and altered gamma-aminobutyric acid signaling pathway." evidence="10">
    <original>V</original>
    <variation>F</variation>
    <location>
        <position position="294"/>
    </location>
</feature>
<feature type="sequence variant" id="VAR_083202" description="In DEE79; increased affinity to GABA; decreased maximal GABA-evoked current density." evidence="8">
    <original>V</original>
    <variation>L</variation>
    <location>
        <position position="294"/>
    </location>
</feature>
<feature type="sequence variant" id="VAR_083203" description="In DEE79; decreased subcellular localization to the cell membrane resulting in altered protein localization to the synapse and altered gamma-aminobutyric acid signaling pathway; the mutant subunit decreases the trafficking of the partnering GABRB3 subunit to the cell membrane with no effect on other subunits." evidence="10">
    <original>S</original>
    <variation>F</variation>
    <location>
        <position position="413"/>
    </location>
</feature>
<feature type="helix" evidence="15">
    <location>
        <begin position="46"/>
        <end position="57"/>
    </location>
</feature>
<feature type="turn" evidence="15">
    <location>
        <begin position="66"/>
        <end position="70"/>
    </location>
</feature>
<feature type="strand" evidence="15">
    <location>
        <begin position="73"/>
        <end position="88"/>
    </location>
</feature>
<feature type="turn" evidence="15">
    <location>
        <begin position="89"/>
        <end position="92"/>
    </location>
</feature>
<feature type="strand" evidence="15">
    <location>
        <begin position="93"/>
        <end position="105"/>
    </location>
</feature>
<feature type="helix" evidence="15">
    <location>
        <begin position="107"/>
        <end position="109"/>
    </location>
</feature>
<feature type="strand" evidence="15">
    <location>
        <begin position="114"/>
        <end position="120"/>
    </location>
</feature>
<feature type="helix" evidence="15">
    <location>
        <begin position="122"/>
        <end position="124"/>
    </location>
</feature>
<feature type="turn" evidence="15">
    <location>
        <begin position="125"/>
        <end position="127"/>
    </location>
</feature>
<feature type="strand" evidence="15">
    <location>
        <begin position="133"/>
        <end position="135"/>
    </location>
</feature>
<feature type="strand" evidence="15">
    <location>
        <begin position="138"/>
        <end position="143"/>
    </location>
</feature>
<feature type="strand" evidence="15">
    <location>
        <begin position="146"/>
        <end position="148"/>
    </location>
</feature>
<feature type="strand" evidence="15">
    <location>
        <begin position="150"/>
        <end position="156"/>
    </location>
</feature>
<feature type="strand" evidence="15">
    <location>
        <begin position="160"/>
        <end position="172"/>
    </location>
</feature>
<feature type="turn" evidence="15">
    <location>
        <begin position="178"/>
        <end position="181"/>
    </location>
</feature>
<feature type="strand" evidence="15">
    <location>
        <begin position="184"/>
        <end position="187"/>
    </location>
</feature>
<feature type="strand" evidence="15">
    <location>
        <begin position="190"/>
        <end position="195"/>
    </location>
</feature>
<feature type="turn" evidence="15">
    <location>
        <begin position="198"/>
        <end position="200"/>
    </location>
</feature>
<feature type="strand" evidence="15">
    <location>
        <begin position="201"/>
        <end position="205"/>
    </location>
</feature>
<feature type="strand" evidence="15">
    <location>
        <begin position="208"/>
        <end position="210"/>
    </location>
</feature>
<feature type="strand" evidence="15">
    <location>
        <begin position="212"/>
        <end position="215"/>
    </location>
</feature>
<feature type="turn" evidence="15">
    <location>
        <begin position="217"/>
        <end position="219"/>
    </location>
</feature>
<feature type="strand" evidence="15">
    <location>
        <begin position="223"/>
        <end position="239"/>
    </location>
</feature>
<feature type="strand" evidence="15">
    <location>
        <begin position="242"/>
        <end position="255"/>
    </location>
</feature>
<feature type="helix" evidence="15">
    <location>
        <begin position="258"/>
        <end position="263"/>
    </location>
</feature>
<feature type="helix" evidence="15">
    <location>
        <begin position="265"/>
        <end position="276"/>
    </location>
</feature>
<feature type="helix" evidence="15">
    <location>
        <begin position="277"/>
        <end position="280"/>
    </location>
</feature>
<feature type="helix" evidence="15">
    <location>
        <begin position="286"/>
        <end position="309"/>
    </location>
</feature>
<feature type="helix" evidence="15">
    <location>
        <begin position="319"/>
        <end position="344"/>
    </location>
</feature>
<feature type="turn" evidence="15">
    <location>
        <begin position="345"/>
        <end position="347"/>
    </location>
</feature>
<feature type="helix" evidence="15">
    <location>
        <begin position="421"/>
        <end position="449"/>
    </location>
</feature>
<evidence type="ECO:0000250" key="1">
    <source>
        <dbReference type="UniProtKB" id="P19969"/>
    </source>
</evidence>
<evidence type="ECO:0000250" key="2">
    <source>
        <dbReference type="UniProtKB" id="P62813"/>
    </source>
</evidence>
<evidence type="ECO:0000250" key="3">
    <source>
        <dbReference type="UniProtKB" id="Q8BHJ7"/>
    </source>
</evidence>
<evidence type="ECO:0000255" key="4"/>
<evidence type="ECO:0000256" key="5">
    <source>
        <dbReference type="SAM" id="MobiDB-lite"/>
    </source>
</evidence>
<evidence type="ECO:0000269" key="6">
    <source>
    </source>
</evidence>
<evidence type="ECO:0000269" key="7">
    <source>
    </source>
</evidence>
<evidence type="ECO:0000269" key="8">
    <source>
    </source>
</evidence>
<evidence type="ECO:0000269" key="9">
    <source>
    </source>
</evidence>
<evidence type="ECO:0000269" key="10">
    <source>
    </source>
</evidence>
<evidence type="ECO:0000303" key="11">
    <source>
    </source>
</evidence>
<evidence type="ECO:0000305" key="12"/>
<evidence type="ECO:0000312" key="13">
    <source>
        <dbReference type="HGNC" id="HGNC:4079"/>
    </source>
</evidence>
<evidence type="ECO:0007744" key="14">
    <source>
        <dbReference type="PDB" id="6A96"/>
    </source>
</evidence>
<evidence type="ECO:0007829" key="15">
    <source>
        <dbReference type="PDB" id="8BHG"/>
    </source>
</evidence>
<organism>
    <name type="scientific">Homo sapiens</name>
    <name type="common">Human</name>
    <dbReference type="NCBI Taxonomy" id="9606"/>
    <lineage>
        <taxon>Eukaryota</taxon>
        <taxon>Metazoa</taxon>
        <taxon>Chordata</taxon>
        <taxon>Craniata</taxon>
        <taxon>Vertebrata</taxon>
        <taxon>Euteleostomi</taxon>
        <taxon>Mammalia</taxon>
        <taxon>Eutheria</taxon>
        <taxon>Euarchontoglires</taxon>
        <taxon>Primates</taxon>
        <taxon>Haplorrhini</taxon>
        <taxon>Catarrhini</taxon>
        <taxon>Hominidae</taxon>
        <taxon>Homo</taxon>
    </lineage>
</organism>
<protein>
    <recommendedName>
        <fullName evidence="1">Gamma-aminobutyric acid receptor subunit alpha-5</fullName>
    </recommendedName>
    <alternativeName>
        <fullName evidence="11">GABA(A) receptor subunit alpha-5</fullName>
        <shortName>GABAAR subunit alpha-5</shortName>
    </alternativeName>
</protein>
<reference key="1">
    <citation type="journal article" date="1992" name="Biochem. Soc. Trans.">
        <title>Cloning and expression of a cDNA encoding the human GABA-A receptor alpha 5 subunit.</title>
        <authorList>
            <person name="Wingrove P."/>
            <person name="Hadingham K."/>
            <person name="Wafford K."/>
            <person name="Kemp J.A."/>
            <person name="Ragan C.I."/>
            <person name="Whiting P."/>
        </authorList>
    </citation>
    <scope>NUCLEOTIDE SEQUENCE [MRNA]</scope>
</reference>
<reference key="2">
    <citation type="journal article" date="1993" name="Hum. Mol. Genet.">
        <title>FISH ordering of reference markers and of the gene for the alpha 5 subunit of the gamma-aminobutyric acid receptor (GABRA5) within the Angelman and Prader-Willi syndrome chromosomal regions.</title>
        <authorList>
            <person name="Knoll J.H."/>
            <person name="Sinnett D."/>
            <person name="Wagstaff J."/>
            <person name="Glatt K.A."/>
            <person name="Wilcox A.S."/>
            <person name="Whiting P.J."/>
            <person name="Wingrove P."/>
            <person name="Sikela J.M."/>
            <person name="Lalande M."/>
        </authorList>
    </citation>
    <scope>NUCLEOTIDE SEQUENCE [MRNA]</scope>
</reference>
<reference key="3">
    <citation type="journal article" date="2004" name="Nat. Genet.">
        <title>Complete sequencing and characterization of 21,243 full-length human cDNAs.</title>
        <authorList>
            <person name="Ota T."/>
            <person name="Suzuki Y."/>
            <person name="Nishikawa T."/>
            <person name="Otsuki T."/>
            <person name="Sugiyama T."/>
            <person name="Irie R."/>
            <person name="Wakamatsu A."/>
            <person name="Hayashi K."/>
            <person name="Sato H."/>
            <person name="Nagai K."/>
            <person name="Kimura K."/>
            <person name="Makita H."/>
            <person name="Sekine M."/>
            <person name="Obayashi M."/>
            <person name="Nishi T."/>
            <person name="Shibahara T."/>
            <person name="Tanaka T."/>
            <person name="Ishii S."/>
            <person name="Yamamoto J."/>
            <person name="Saito K."/>
            <person name="Kawai Y."/>
            <person name="Isono Y."/>
            <person name="Nakamura Y."/>
            <person name="Nagahari K."/>
            <person name="Murakami K."/>
            <person name="Yasuda T."/>
            <person name="Iwayanagi T."/>
            <person name="Wagatsuma M."/>
            <person name="Shiratori A."/>
            <person name="Sudo H."/>
            <person name="Hosoiri T."/>
            <person name="Kaku Y."/>
            <person name="Kodaira H."/>
            <person name="Kondo H."/>
            <person name="Sugawara M."/>
            <person name="Takahashi M."/>
            <person name="Kanda K."/>
            <person name="Yokoi T."/>
            <person name="Furuya T."/>
            <person name="Kikkawa E."/>
            <person name="Omura Y."/>
            <person name="Abe K."/>
            <person name="Kamihara K."/>
            <person name="Katsuta N."/>
            <person name="Sato K."/>
            <person name="Tanikawa M."/>
            <person name="Yamazaki M."/>
            <person name="Ninomiya K."/>
            <person name="Ishibashi T."/>
            <person name="Yamashita H."/>
            <person name="Murakawa K."/>
            <person name="Fujimori K."/>
            <person name="Tanai H."/>
            <person name="Kimata M."/>
            <person name="Watanabe M."/>
            <person name="Hiraoka S."/>
            <person name="Chiba Y."/>
            <person name="Ishida S."/>
            <person name="Ono Y."/>
            <person name="Takiguchi S."/>
            <person name="Watanabe S."/>
            <person name="Yosida M."/>
            <person name="Hotuta T."/>
            <person name="Kusano J."/>
            <person name="Kanehori K."/>
            <person name="Takahashi-Fujii A."/>
            <person name="Hara H."/>
            <person name="Tanase T.-O."/>
            <person name="Nomura Y."/>
            <person name="Togiya S."/>
            <person name="Komai F."/>
            <person name="Hara R."/>
            <person name="Takeuchi K."/>
            <person name="Arita M."/>
            <person name="Imose N."/>
            <person name="Musashino K."/>
            <person name="Yuuki H."/>
            <person name="Oshima A."/>
            <person name="Sasaki N."/>
            <person name="Aotsuka S."/>
            <person name="Yoshikawa Y."/>
            <person name="Matsunawa H."/>
            <person name="Ichihara T."/>
            <person name="Shiohata N."/>
            <person name="Sano S."/>
            <person name="Moriya S."/>
            <person name="Momiyama H."/>
            <person name="Satoh N."/>
            <person name="Takami S."/>
            <person name="Terashima Y."/>
            <person name="Suzuki O."/>
            <person name="Nakagawa S."/>
            <person name="Senoh A."/>
            <person name="Mizoguchi H."/>
            <person name="Goto Y."/>
            <person name="Shimizu F."/>
            <person name="Wakebe H."/>
            <person name="Hishigaki H."/>
            <person name="Watanabe T."/>
            <person name="Sugiyama A."/>
            <person name="Takemoto M."/>
            <person name="Kawakami B."/>
            <person name="Yamazaki M."/>
            <person name="Watanabe K."/>
            <person name="Kumagai A."/>
            <person name="Itakura S."/>
            <person name="Fukuzumi Y."/>
            <person name="Fujimori Y."/>
            <person name="Komiyama M."/>
            <person name="Tashiro H."/>
            <person name="Tanigami A."/>
            <person name="Fujiwara T."/>
            <person name="Ono T."/>
            <person name="Yamada K."/>
            <person name="Fujii Y."/>
            <person name="Ozaki K."/>
            <person name="Hirao M."/>
            <person name="Ohmori Y."/>
            <person name="Kawabata A."/>
            <person name="Hikiji T."/>
            <person name="Kobatake N."/>
            <person name="Inagaki H."/>
            <person name="Ikema Y."/>
            <person name="Okamoto S."/>
            <person name="Okitani R."/>
            <person name="Kawakami T."/>
            <person name="Noguchi S."/>
            <person name="Itoh T."/>
            <person name="Shigeta K."/>
            <person name="Senba T."/>
            <person name="Matsumura K."/>
            <person name="Nakajima Y."/>
            <person name="Mizuno T."/>
            <person name="Morinaga M."/>
            <person name="Sasaki M."/>
            <person name="Togashi T."/>
            <person name="Oyama M."/>
            <person name="Hata H."/>
            <person name="Watanabe M."/>
            <person name="Komatsu T."/>
            <person name="Mizushima-Sugano J."/>
            <person name="Satoh T."/>
            <person name="Shirai Y."/>
            <person name="Takahashi Y."/>
            <person name="Nakagawa K."/>
            <person name="Okumura K."/>
            <person name="Nagase T."/>
            <person name="Nomura N."/>
            <person name="Kikuchi H."/>
            <person name="Masuho Y."/>
            <person name="Yamashita R."/>
            <person name="Nakai K."/>
            <person name="Yada T."/>
            <person name="Nakamura Y."/>
            <person name="Ohara O."/>
            <person name="Isogai T."/>
            <person name="Sugano S."/>
        </authorList>
    </citation>
    <scope>NUCLEOTIDE SEQUENCE [LARGE SCALE MRNA]</scope>
    <source>
        <tissue>Brain</tissue>
    </source>
</reference>
<reference key="4">
    <citation type="submission" date="2003-08" db="EMBL/GenBank/DDBJ databases">
        <title>Cloning of human full-length CDSs in BD Creator(TM) system donor vector.</title>
        <authorList>
            <person name="Kalnine N."/>
            <person name="Chen X."/>
            <person name="Rolfs A."/>
            <person name="Halleck A."/>
            <person name="Hines L."/>
            <person name="Eisenstein S."/>
            <person name="Koundinya M."/>
            <person name="Raphael J."/>
            <person name="Moreira D."/>
            <person name="Kelley T."/>
            <person name="LaBaer J."/>
            <person name="Lin Y."/>
            <person name="Phelan M."/>
            <person name="Farmer A."/>
        </authorList>
    </citation>
    <scope>NUCLEOTIDE SEQUENCE [LARGE SCALE MRNA]</scope>
</reference>
<reference key="5">
    <citation type="journal article" date="2004" name="Genome Res.">
        <title>The status, quality, and expansion of the NIH full-length cDNA project: the Mammalian Gene Collection (MGC).</title>
        <authorList>
            <consortium name="The MGC Project Team"/>
        </authorList>
    </citation>
    <scope>NUCLEOTIDE SEQUENCE [LARGE SCALE MRNA]</scope>
    <source>
        <tissue>Brain</tissue>
    </source>
</reference>
<reference key="6">
    <citation type="journal article" date="1997" name="Genomics">
        <title>Human gamma-aminobutyric acid-type A receptor alpha5 subunit gene (GABRA5): characterization and structural organization of the 5' flanking region.</title>
        <authorList>
            <person name="Kim Y."/>
            <person name="Glatt H."/>
            <person name="Xie W."/>
            <person name="Sinnett D."/>
            <person name="Lalande M."/>
        </authorList>
    </citation>
    <scope>NUCLEOTIDE SEQUENCE [GENOMIC DNA] OF 1-29</scope>
    <source>
        <tissue>Fetal brain</tissue>
    </source>
</reference>
<reference key="7">
    <citation type="submission" date="2000-01" db="EMBL/GenBank/DDBJ databases">
        <title>Homo sapiens gamma-aminobutyric acid (GABA) A receptor, alpha 5 subunit gene (GABRA5).</title>
        <authorList>
            <person name="Kim S.-J."/>
            <person name="Gonen D."/>
            <person name="Yang Z.-Y."/>
            <person name="Reliford A."/>
            <person name="Dy A."/>
            <person name="Leventhal B.L."/>
            <person name="Cook E.H. Jr."/>
        </authorList>
    </citation>
    <scope>NUCLEOTIDE SEQUENCE [GENOMIC DNA] OF 71-166; 195-241 AND 294-363</scope>
</reference>
<reference key="8">
    <citation type="journal article" date="2004" name="Proc. Natl. Acad. Sci. U.S.A.">
        <title>Tonic inhibition in mouse hippocampal CA1 pyramidal neurons is mediated by alpha5 subunit-containing gamma-aminobutyric acid type A receptors.</title>
        <authorList>
            <person name="Caraiscos V.B."/>
            <person name="Elliott E.M."/>
            <person name="You-Ten K.E."/>
            <person name="Cheng V.Y."/>
            <person name="Belelli D."/>
            <person name="Newell J.G."/>
            <person name="Jackson M.F."/>
            <person name="Lambert J.J."/>
            <person name="Rosahl T.W."/>
            <person name="Wafford K.A."/>
            <person name="MacDonald J.F."/>
            <person name="Orser B.A."/>
        </authorList>
    </citation>
    <scope>FUNCTION</scope>
    <scope>TRANSPORTER ACTIVITY</scope>
    <scope>INTERACTION WITH GABRB3 AND GABRG2</scope>
</reference>
<reference key="9">
    <citation type="journal article" date="2007" name="Proteomics">
        <title>Tryptic digestion of ubiquitin standards reveals an improved strategy for identifying ubiquitinated proteins by mass spectrometry.</title>
        <authorList>
            <person name="Denis N.J."/>
            <person name="Vasilescu J."/>
            <person name="Lambert J.-P."/>
            <person name="Smith J.C."/>
            <person name="Figeys D."/>
        </authorList>
    </citation>
    <scope>UBIQUITINATION [LARGE SCALE ANALYSIS] AT LYS-355</scope>
    <scope>IDENTIFICATION BY MASS SPECTROMETRY</scope>
    <source>
        <tissue>Mammary cancer</tissue>
    </source>
</reference>
<reference evidence="14" key="10">
    <citation type="journal article" date="2018" name="Cell Res.">
        <title>Cryo-EM structure of the human alpha5beta3 GABAA receptor.</title>
        <authorList>
            <person name="Liu S."/>
            <person name="Xu L."/>
            <person name="Guan F."/>
            <person name="Liu Y.T."/>
            <person name="Cui Y."/>
            <person name="Zhang Q."/>
            <person name="Zheng X."/>
            <person name="Bi G.Q."/>
            <person name="Zhou Z.H."/>
            <person name="Zhang X."/>
            <person name="Ye S."/>
        </authorList>
    </citation>
    <scope>STRUCTURE BY ELECTRON MICROSCOPY (3.51 ANGSTROMS) OF 1-346 AND 424-462</scope>
    <scope>FUNCTION</scope>
    <scope>TRANSPORTER ACTIVITY</scope>
    <scope>INTERACTION WITH GABRB3</scope>
    <scope>SUBCELLULAR LOCATION</scope>
    <scope>DISULFIDE BOND</scope>
    <scope>GLYCOSYLATION AT ASN-145 AND ASN-236</scope>
</reference>
<reference key="11">
    <citation type="journal article" date="2018" name="Brain">
        <title>De novo variants in GABRA2 and GABRA5 alter receptor function and contribute to early-onset epilepsy.</title>
        <authorList>
            <person name="Butler K.M."/>
            <person name="Moody O.A."/>
            <person name="Schuler E."/>
            <person name="Coryell J."/>
            <person name="Alexander J.J."/>
            <person name="Jenkins A."/>
            <person name="Escayg A."/>
        </authorList>
    </citation>
    <scope>INVOLVEMENT IN DEE79</scope>
    <scope>VARIANT DEE79 LEU-294</scope>
    <scope>CHARACTERIZATION OF VARIANT DEE79 LEU-294</scope>
    <scope>FUNCTION</scope>
    <scope>TRANSPORTER ACTIVITY</scope>
</reference>
<reference key="12">
    <citation type="journal article" date="2019" name="Brain">
        <title>Altered inhibitory synapses in de novo GABRA5 and GABRA1 mutations associated with early onset epileptic encephalopathies.</title>
        <authorList>
            <person name="Hernandez C.C."/>
            <person name="Xiang Wei W."/>
            <person name="Hu N."/>
            <person name="Shen D."/>
            <person name="Shen W."/>
            <person name="Lagrange A.H."/>
            <person name="Zhang Y."/>
            <person name="Dai L."/>
            <person name="Ding C."/>
            <person name="Sun Z."/>
            <person name="Hu J."/>
            <person name="Zhu H."/>
            <person name="Jiang Y."/>
            <person name="Macdonald R.L."/>
        </authorList>
    </citation>
    <scope>INVOLVEMENT IN DEE79</scope>
    <scope>VARIANTS DEE79 PHE-294 AND PHE-413</scope>
    <scope>CHARACTERIZATION OF VARIANTS DEE79 PHE-294 AND PHE-413</scope>
    <scope>FUNCTION</scope>
    <scope>TRANSPORTER ACTIVITY</scope>
    <scope>SUBCELLULAR LOCATION</scope>
</reference>
<gene>
    <name evidence="13" type="primary">GABRA5</name>
</gene>
<accession>P31644</accession>
<accession>A8K338</accession>
<accession>Q14DC2</accession>
<accession>Q53XL6</accession>
<accession>Q9NYT3</accession>
<accession>Q9NYT4</accession>
<accession>Q9NYT5</accession>
<keyword id="KW-0002">3D-structure</keyword>
<keyword id="KW-1003">Cell membrane</keyword>
<keyword id="KW-0868">Chloride</keyword>
<keyword id="KW-0869">Chloride channel</keyword>
<keyword id="KW-0225">Disease variant</keyword>
<keyword id="KW-1015">Disulfide bond</keyword>
<keyword id="KW-0887">Epilepsy</keyword>
<keyword id="KW-0325">Glycoprotein</keyword>
<keyword id="KW-0407">Ion channel</keyword>
<keyword id="KW-0406">Ion transport</keyword>
<keyword id="KW-1017">Isopeptide bond</keyword>
<keyword id="KW-1071">Ligand-gated ion channel</keyword>
<keyword id="KW-0472">Membrane</keyword>
<keyword id="KW-0628">Postsynaptic cell membrane</keyword>
<keyword id="KW-1267">Proteomics identification</keyword>
<keyword id="KW-0675">Receptor</keyword>
<keyword id="KW-1185">Reference proteome</keyword>
<keyword id="KW-0732">Signal</keyword>
<keyword id="KW-0770">Synapse</keyword>
<keyword id="KW-0812">Transmembrane</keyword>
<keyword id="KW-1133">Transmembrane helix</keyword>
<keyword id="KW-0813">Transport</keyword>
<keyword id="KW-0832">Ubl conjugation</keyword>